<dbReference type="EMBL" id="CR954246">
    <property type="protein sequence ID" value="CAI87850.1"/>
    <property type="molecule type" value="Genomic_DNA"/>
</dbReference>
<dbReference type="SMR" id="Q3IJK2"/>
<dbReference type="STRING" id="326442.PSHAa2813"/>
<dbReference type="KEGG" id="pha:PSHAa2813"/>
<dbReference type="PATRIC" id="fig|326442.8.peg.2712"/>
<dbReference type="eggNOG" id="COG0098">
    <property type="taxonomic scope" value="Bacteria"/>
</dbReference>
<dbReference type="HOGENOM" id="CLU_065898_2_2_6"/>
<dbReference type="BioCyc" id="PHAL326442:PSHA_RS13810-MONOMER"/>
<dbReference type="Proteomes" id="UP000006843">
    <property type="component" value="Chromosome I"/>
</dbReference>
<dbReference type="GO" id="GO:0015935">
    <property type="term" value="C:small ribosomal subunit"/>
    <property type="evidence" value="ECO:0007669"/>
    <property type="project" value="InterPro"/>
</dbReference>
<dbReference type="GO" id="GO:0019843">
    <property type="term" value="F:rRNA binding"/>
    <property type="evidence" value="ECO:0007669"/>
    <property type="project" value="UniProtKB-UniRule"/>
</dbReference>
<dbReference type="GO" id="GO:0003735">
    <property type="term" value="F:structural constituent of ribosome"/>
    <property type="evidence" value="ECO:0007669"/>
    <property type="project" value="InterPro"/>
</dbReference>
<dbReference type="GO" id="GO:0006412">
    <property type="term" value="P:translation"/>
    <property type="evidence" value="ECO:0007669"/>
    <property type="project" value="UniProtKB-UniRule"/>
</dbReference>
<dbReference type="FunFam" id="3.30.160.20:FF:000001">
    <property type="entry name" value="30S ribosomal protein S5"/>
    <property type="match status" value="1"/>
</dbReference>
<dbReference type="FunFam" id="3.30.230.10:FF:000002">
    <property type="entry name" value="30S ribosomal protein S5"/>
    <property type="match status" value="1"/>
</dbReference>
<dbReference type="Gene3D" id="3.30.160.20">
    <property type="match status" value="1"/>
</dbReference>
<dbReference type="Gene3D" id="3.30.230.10">
    <property type="match status" value="1"/>
</dbReference>
<dbReference type="HAMAP" id="MF_01307_B">
    <property type="entry name" value="Ribosomal_uS5_B"/>
    <property type="match status" value="1"/>
</dbReference>
<dbReference type="InterPro" id="IPR020568">
    <property type="entry name" value="Ribosomal_Su5_D2-typ_SF"/>
</dbReference>
<dbReference type="InterPro" id="IPR000851">
    <property type="entry name" value="Ribosomal_uS5"/>
</dbReference>
<dbReference type="InterPro" id="IPR005712">
    <property type="entry name" value="Ribosomal_uS5_bac-type"/>
</dbReference>
<dbReference type="InterPro" id="IPR005324">
    <property type="entry name" value="Ribosomal_uS5_C"/>
</dbReference>
<dbReference type="InterPro" id="IPR013810">
    <property type="entry name" value="Ribosomal_uS5_N"/>
</dbReference>
<dbReference type="InterPro" id="IPR018192">
    <property type="entry name" value="Ribosomal_uS5_N_CS"/>
</dbReference>
<dbReference type="InterPro" id="IPR014721">
    <property type="entry name" value="Ribsml_uS5_D2-typ_fold_subgr"/>
</dbReference>
<dbReference type="NCBIfam" id="TIGR01021">
    <property type="entry name" value="rpsE_bact"/>
    <property type="match status" value="1"/>
</dbReference>
<dbReference type="PANTHER" id="PTHR48277">
    <property type="entry name" value="MITOCHONDRIAL RIBOSOMAL PROTEIN S5"/>
    <property type="match status" value="1"/>
</dbReference>
<dbReference type="PANTHER" id="PTHR48277:SF1">
    <property type="entry name" value="MITOCHONDRIAL RIBOSOMAL PROTEIN S5"/>
    <property type="match status" value="1"/>
</dbReference>
<dbReference type="Pfam" id="PF00333">
    <property type="entry name" value="Ribosomal_S5"/>
    <property type="match status" value="1"/>
</dbReference>
<dbReference type="Pfam" id="PF03719">
    <property type="entry name" value="Ribosomal_S5_C"/>
    <property type="match status" value="1"/>
</dbReference>
<dbReference type="SUPFAM" id="SSF54768">
    <property type="entry name" value="dsRNA-binding domain-like"/>
    <property type="match status" value="1"/>
</dbReference>
<dbReference type="SUPFAM" id="SSF54211">
    <property type="entry name" value="Ribosomal protein S5 domain 2-like"/>
    <property type="match status" value="1"/>
</dbReference>
<dbReference type="PROSITE" id="PS00585">
    <property type="entry name" value="RIBOSOMAL_S5"/>
    <property type="match status" value="1"/>
</dbReference>
<dbReference type="PROSITE" id="PS50881">
    <property type="entry name" value="S5_DSRBD"/>
    <property type="match status" value="1"/>
</dbReference>
<sequence>MANVEAKQQQPDLAEKLIAVNRVSKVVKGGRIFSFTALTVVGDGAGKVGFGYGKAREVPAAIQKAMEKARRNMINVDLNGNTLQHPVKGRHAGSQVFMKPASEGTGIIAGGAMRAVLEVTGVQNVLSKCYGSTNPINVVRATISALENMNSPQSIAAKRGLRIDEILG</sequence>
<comment type="function">
    <text evidence="1">With S4 and S12 plays an important role in translational accuracy.</text>
</comment>
<comment type="function">
    <text evidence="1">Located at the back of the 30S subunit body where it stabilizes the conformation of the head with respect to the body.</text>
</comment>
<comment type="subunit">
    <text evidence="1">Part of the 30S ribosomal subunit. Contacts proteins S4 and S8.</text>
</comment>
<comment type="domain">
    <text>The N-terminal domain interacts with the head of the 30S subunit; the C-terminal domain interacts with the body and contacts protein S4. The interaction surface between S4 and S5 is involved in control of translational fidelity.</text>
</comment>
<comment type="similarity">
    <text evidence="1">Belongs to the universal ribosomal protein uS5 family.</text>
</comment>
<keyword id="KW-1185">Reference proteome</keyword>
<keyword id="KW-0687">Ribonucleoprotein</keyword>
<keyword id="KW-0689">Ribosomal protein</keyword>
<keyword id="KW-0694">RNA-binding</keyword>
<keyword id="KW-0699">rRNA-binding</keyword>
<feature type="chain" id="PRO_0000230359" description="Small ribosomal subunit protein uS5">
    <location>
        <begin position="1"/>
        <end position="168"/>
    </location>
</feature>
<feature type="domain" description="S5 DRBM" evidence="1">
    <location>
        <begin position="13"/>
        <end position="76"/>
    </location>
</feature>
<proteinExistence type="inferred from homology"/>
<accession>Q3IJK2</accession>
<protein>
    <recommendedName>
        <fullName evidence="1">Small ribosomal subunit protein uS5</fullName>
    </recommendedName>
    <alternativeName>
        <fullName evidence="2">30S ribosomal protein S5</fullName>
    </alternativeName>
</protein>
<name>RS5_PSET1</name>
<evidence type="ECO:0000255" key="1">
    <source>
        <dbReference type="HAMAP-Rule" id="MF_01307"/>
    </source>
</evidence>
<evidence type="ECO:0000305" key="2"/>
<gene>
    <name evidence="1" type="primary">rpsE</name>
    <name type="ordered locus">PSHAa2813</name>
</gene>
<reference key="1">
    <citation type="journal article" date="2005" name="Genome Res.">
        <title>Coping with cold: the genome of the versatile marine Antarctica bacterium Pseudoalteromonas haloplanktis TAC125.</title>
        <authorList>
            <person name="Medigue C."/>
            <person name="Krin E."/>
            <person name="Pascal G."/>
            <person name="Barbe V."/>
            <person name="Bernsel A."/>
            <person name="Bertin P.N."/>
            <person name="Cheung F."/>
            <person name="Cruveiller S."/>
            <person name="D'Amico S."/>
            <person name="Duilio A."/>
            <person name="Fang G."/>
            <person name="Feller G."/>
            <person name="Ho C."/>
            <person name="Mangenot S."/>
            <person name="Marino G."/>
            <person name="Nilsson J."/>
            <person name="Parrilli E."/>
            <person name="Rocha E.P.C."/>
            <person name="Rouy Z."/>
            <person name="Sekowska A."/>
            <person name="Tutino M.L."/>
            <person name="Vallenet D."/>
            <person name="von Heijne G."/>
            <person name="Danchin A."/>
        </authorList>
    </citation>
    <scope>NUCLEOTIDE SEQUENCE [LARGE SCALE GENOMIC DNA]</scope>
    <source>
        <strain>TAC 125</strain>
    </source>
</reference>
<organism>
    <name type="scientific">Pseudoalteromonas translucida (strain TAC 125)</name>
    <dbReference type="NCBI Taxonomy" id="326442"/>
    <lineage>
        <taxon>Bacteria</taxon>
        <taxon>Pseudomonadati</taxon>
        <taxon>Pseudomonadota</taxon>
        <taxon>Gammaproteobacteria</taxon>
        <taxon>Alteromonadales</taxon>
        <taxon>Pseudoalteromonadaceae</taxon>
        <taxon>Pseudoalteromonas</taxon>
    </lineage>
</organism>